<organism>
    <name type="scientific">Chlamydia pneumoniae</name>
    <name type="common">Chlamydophila pneumoniae</name>
    <dbReference type="NCBI Taxonomy" id="83558"/>
    <lineage>
        <taxon>Bacteria</taxon>
        <taxon>Pseudomonadati</taxon>
        <taxon>Chlamydiota</taxon>
        <taxon>Chlamydiia</taxon>
        <taxon>Chlamydiales</taxon>
        <taxon>Chlamydiaceae</taxon>
        <taxon>Chlamydia/Chlamydophila group</taxon>
        <taxon>Chlamydia</taxon>
    </lineage>
</organism>
<dbReference type="EMBL" id="AJ133034">
    <property type="protein sequence ID" value="CAB37071.1"/>
    <property type="molecule type" value="Genomic_DNA"/>
</dbReference>
<dbReference type="EMBL" id="AE002161">
    <property type="protein sequence ID" value="AAF38160.1"/>
    <property type="molecule type" value="Genomic_DNA"/>
</dbReference>
<dbReference type="EMBL" id="BA000008">
    <property type="protein sequence ID" value="BAA98657.1"/>
    <property type="molecule type" value="Genomic_DNA"/>
</dbReference>
<dbReference type="EMBL" id="AE009440">
    <property type="protein sequence ID" value="AAP98398.1"/>
    <property type="molecule type" value="Genomic_DNA"/>
</dbReference>
<dbReference type="EMBL" id="AJ001311">
    <property type="protein sequence ID" value="CAA04671.1"/>
    <property type="molecule type" value="Genomic_DNA"/>
</dbReference>
<dbReference type="PIR" id="G81591">
    <property type="entry name" value="G81591"/>
</dbReference>
<dbReference type="PIR" id="G86546">
    <property type="entry name" value="G86546"/>
</dbReference>
<dbReference type="RefSeq" id="WP_011126144.1">
    <property type="nucleotide sequence ID" value="NZ_LN847257.1"/>
</dbReference>
<dbReference type="STRING" id="406984.CPK_ORF00963"/>
<dbReference type="GeneID" id="45050496"/>
<dbReference type="KEGG" id="cpa:CP_0303"/>
<dbReference type="KEGG" id="cpj:pmp_10"/>
<dbReference type="KEGG" id="cpt:CpB0467"/>
<dbReference type="eggNOG" id="COG3468">
    <property type="taxonomic scope" value="Bacteria"/>
</dbReference>
<dbReference type="HOGENOM" id="CLU_004549_1_1_0"/>
<dbReference type="Proteomes" id="UP000000583">
    <property type="component" value="Chromosome"/>
</dbReference>
<dbReference type="GO" id="GO:0009279">
    <property type="term" value="C:cell outer membrane"/>
    <property type="evidence" value="ECO:0007669"/>
    <property type="project" value="UniProtKB-SubCell"/>
</dbReference>
<dbReference type="GO" id="GO:0005576">
    <property type="term" value="C:extracellular region"/>
    <property type="evidence" value="ECO:0007669"/>
    <property type="project" value="UniProtKB-KW"/>
</dbReference>
<dbReference type="Gene3D" id="2.40.128.130">
    <property type="entry name" value="Autotransporter beta-domain"/>
    <property type="match status" value="1"/>
</dbReference>
<dbReference type="InterPro" id="IPR005546">
    <property type="entry name" value="Autotransporte_beta"/>
</dbReference>
<dbReference type="InterPro" id="IPR036709">
    <property type="entry name" value="Autotransporte_beta_dom_sf"/>
</dbReference>
<dbReference type="InterPro" id="IPR011050">
    <property type="entry name" value="Pectin_lyase_fold/virulence"/>
</dbReference>
<dbReference type="InterPro" id="IPR011427">
    <property type="entry name" value="Polymorphic_membr_middle"/>
</dbReference>
<dbReference type="InterPro" id="IPR003368">
    <property type="entry name" value="POMP_repeat"/>
</dbReference>
<dbReference type="NCBIfam" id="TIGR01376">
    <property type="entry name" value="POMP_repeat"/>
    <property type="match status" value="4"/>
</dbReference>
<dbReference type="Pfam" id="PF03797">
    <property type="entry name" value="Autotransporter"/>
    <property type="match status" value="1"/>
</dbReference>
<dbReference type="Pfam" id="PF02415">
    <property type="entry name" value="Chlam_PMP"/>
    <property type="match status" value="3"/>
</dbReference>
<dbReference type="Pfam" id="PF07548">
    <property type="entry name" value="ChlamPMP_M"/>
    <property type="match status" value="1"/>
</dbReference>
<dbReference type="SMART" id="SM00869">
    <property type="entry name" value="Autotransporter"/>
    <property type="match status" value="1"/>
</dbReference>
<dbReference type="SUPFAM" id="SSF103515">
    <property type="entry name" value="Autotransporter"/>
    <property type="match status" value="1"/>
</dbReference>
<dbReference type="SUPFAM" id="SSF51126">
    <property type="entry name" value="Pectin lyase-like"/>
    <property type="match status" value="1"/>
</dbReference>
<dbReference type="PROSITE" id="PS51208">
    <property type="entry name" value="AUTOTRANSPORTER"/>
    <property type="match status" value="1"/>
</dbReference>
<comment type="subcellular location">
    <subcellularLocation>
        <location>Secreted</location>
        <location>Cell wall</location>
    </subcellularLocation>
    <subcellularLocation>
        <location evidence="3">Cell outer membrane</location>
        <topology evidence="3">Peripheral membrane protein</topology>
        <orientation evidence="3">Extracellular side</orientation>
    </subcellularLocation>
</comment>
<comment type="developmental stage">
    <text>Elementary body.</text>
</comment>
<comment type="similarity">
    <text evidence="3">Belongs to the PMP outer membrane protein family.</text>
</comment>
<keyword id="KW-0998">Cell outer membrane</keyword>
<keyword id="KW-0134">Cell wall</keyword>
<keyword id="KW-0472">Membrane</keyword>
<keyword id="KW-0964">Secreted</keyword>
<keyword id="KW-0732">Signal</keyword>
<keyword id="KW-0812">Transmembrane</keyword>
<keyword id="KW-1134">Transmembrane beta strand</keyword>
<protein>
    <recommendedName>
        <fullName>Probable outer membrane protein pmp10</fullName>
    </recommendedName>
    <alternativeName>
        <fullName>Outer membrane protein 5</fullName>
    </alternativeName>
    <alternativeName>
        <fullName>Polymorphic membrane protein 10</fullName>
    </alternativeName>
</protein>
<accession>Q9RB65</accession>
<accession>O86163</accession>
<accession>Q9RB64</accession>
<accession>Q9S6P2</accession>
<feature type="signal peptide" evidence="1">
    <location>
        <begin position="1"/>
        <end position="25"/>
    </location>
</feature>
<feature type="chain" id="PRO_0000024740" description="Probable outer membrane protein pmp10">
    <location>
        <begin position="26"/>
        <end position="928"/>
    </location>
</feature>
<feature type="domain" description="Autotransporter" evidence="2">
    <location>
        <begin position="635"/>
        <end position="928"/>
    </location>
</feature>
<feature type="sequence conflict" description="In Ref. 4; AAP98398." evidence="3" ref="4">
    <location>
        <position position="305"/>
    </location>
</feature>
<gene>
    <name type="primary">pmp10</name>
    <name type="synonym">omp5</name>
    <name type="ordered locus">CP_0303</name>
    <name type="ordered locus">CpB0467</name>
</gene>
<proteinExistence type="evidence at transcript level"/>
<sequence>MKSQFSWLVLSSTLACFTSCSTVFAATAENIGPSDSFDGSTNTGTYTPKNTTTGIDYTLTGDITLQNLGDSAALTKGCFSDTTESLSFAGKGYSLSFLNIKSSAEGAALSVTTDKNLSLTGFSSLTFLAAPSSVITTPSGKGAVKCGGDLTFDNNGTILFKQDYCEENGGAISTKNLSLKNSTGSISFEGNKSSATGKKGGAICATGTVDITNNTAPTLFSNNIAEAAGGAINSTGNCTITGNTSLVFSENSVTATAGNGGALSGDADVTISGNQSVTFSGNQAVANGGAIYAKKLTLASGGGGGISFSNNIVQGTTAGNGGAISILAAGECSLSAEAGDITFNGNAIVATTPQTTKRNSIDIGSTAKITNLRAISGHSIFFYDPITANTAADSTDTLNLNKADAGNSTDYSGSIVFSGEKLSEDEAKVADNLTSTLKQPVTLTAGNLVLKRGVTLDTKGFTQTAGSSVIMDAGTTLKASTEEVTLTGLSIPVDSLGEGKKVVIAASAASKNVALSGPILLLDNQGNAYENHDLGKTQDFSFVQLSALGTATTTDVPAVPTVATPTHYGYQGTWGMTWVDDTASTPKTKTATLAWTNTGYLPNPERQGPLVPNSLWGSFSDIQAIQGVIERSALTLCSDRGFWAAGVANFLDKDKKGEKRKYRHKSGGYAIGGAAQTCSENLISFAFCQLFGSDKDFLVAKNHTDTYAGAFYIQHITECSGFIGCLLDKLPGSWSHKPLVLEGQLAYSHVSNDLKTKYTAYPEVKGSWGNNAFNMMLGASSHSYPEYLHCFDTYAPYIKLNLTYIRQDSFSEKGTEGRSFDDSNLFNLSLPIGVKFEKFSDCNDFSYDLTLSYVPDLIRNDPKCTTALVISGASWETYANNLARQALQVRAGSHYAFSPMFEVLGQFVFEVRGSSRIYNVDLGGKFQF</sequence>
<reference key="1">
    <citation type="journal article" date="1999" name="Am. Heart J.">
        <title>Molecular biology of Chlamydia pneumoniae surface proteins and their role in immunopathogenicity.</title>
        <authorList>
            <person name="Christiansen G."/>
            <person name="Boesen T."/>
            <person name="Hjerno K."/>
            <person name="Daugaard L."/>
            <person name="Mygind P."/>
            <person name="Madsen A.S."/>
            <person name="Knudsen K."/>
            <person name="Falk E."/>
            <person name="Birkelund S."/>
        </authorList>
    </citation>
    <scope>NUCLEOTIDE SEQUENCE [GENOMIC DNA]</scope>
    <source>
        <strain>CWL029 / VR1310</strain>
    </source>
</reference>
<reference key="2">
    <citation type="journal article" date="2000" name="Nucleic Acids Res.">
        <title>Genome sequences of Chlamydia trachomatis MoPn and Chlamydia pneumoniae AR39.</title>
        <authorList>
            <person name="Read T.D."/>
            <person name="Brunham R.C."/>
            <person name="Shen C."/>
            <person name="Gill S.R."/>
            <person name="Heidelberg J.F."/>
            <person name="White O."/>
            <person name="Hickey E.K."/>
            <person name="Peterson J.D."/>
            <person name="Utterback T.R."/>
            <person name="Berry K.J."/>
            <person name="Bass S."/>
            <person name="Linher K.D."/>
            <person name="Weidman J.F."/>
            <person name="Khouri H.M."/>
            <person name="Craven B."/>
            <person name="Bowman C."/>
            <person name="Dodson R.J."/>
            <person name="Gwinn M.L."/>
            <person name="Nelson W.C."/>
            <person name="DeBoy R.T."/>
            <person name="Kolonay J.F."/>
            <person name="McClarty G."/>
            <person name="Salzberg S.L."/>
            <person name="Eisen J.A."/>
            <person name="Fraser C.M."/>
        </authorList>
    </citation>
    <scope>NUCLEOTIDE SEQUENCE [LARGE SCALE GENOMIC DNA]</scope>
    <source>
        <strain>AR39</strain>
    </source>
</reference>
<reference key="3">
    <citation type="journal article" date="2000" name="Nucleic Acids Res.">
        <title>Comparison of whole genome sequences of Chlamydia pneumoniae J138 from Japan and CWL029 from USA.</title>
        <authorList>
            <person name="Shirai M."/>
            <person name="Hirakawa H."/>
            <person name="Kimoto M."/>
            <person name="Tabuchi M."/>
            <person name="Kishi F."/>
            <person name="Ouchi K."/>
            <person name="Shiba T."/>
            <person name="Ishii K."/>
            <person name="Hattori M."/>
            <person name="Kuhara S."/>
            <person name="Nakazawa T."/>
        </authorList>
    </citation>
    <scope>NUCLEOTIDE SEQUENCE [LARGE SCALE GENOMIC DNA]</scope>
    <source>
        <strain>J138</strain>
    </source>
</reference>
<reference key="4">
    <citation type="submission" date="2002-05" db="EMBL/GenBank/DDBJ databases">
        <title>The genome sequence of Chlamydia pneumoniae TW183 and comparison with other Chlamydia strains based on whole genome sequence analysis.</title>
        <authorList>
            <person name="Geng M.M."/>
            <person name="Schuhmacher A."/>
            <person name="Muehldorfer I."/>
            <person name="Bensch K.W."/>
            <person name="Schaefer K.P."/>
            <person name="Schneider S."/>
            <person name="Pohl T."/>
            <person name="Essig A."/>
            <person name="Marre R."/>
            <person name="Melchers K."/>
        </authorList>
    </citation>
    <scope>NUCLEOTIDE SEQUENCE [LARGE SCALE GENOMIC DNA]</scope>
    <source>
        <strain>TW-183</strain>
    </source>
</reference>
<reference key="5">
    <citation type="journal article" date="1999" name="Infect. Immun.">
        <title>Identification of two novel genes encoding 97- to 99-kilodalton outer membrane proteins of Chlamydia pneumoniae.</title>
        <authorList>
            <person name="Knudsen K."/>
            <person name="Madsen A.S."/>
            <person name="Mygind P."/>
            <person name="Christiansen G."/>
            <person name="Birkelund S."/>
        </authorList>
    </citation>
    <scope>NUCLEOTIDE SEQUENCE [GENOMIC DNA] OF 1-914</scope>
    <source>
        <strain>CWL029/VR-1310</strain>
    </source>
</reference>
<evidence type="ECO:0000255" key="1"/>
<evidence type="ECO:0000255" key="2">
    <source>
        <dbReference type="PROSITE-ProRule" id="PRU00556"/>
    </source>
</evidence>
<evidence type="ECO:0000305" key="3"/>
<name>PMP10_CHLPN</name>